<accession>Q9FGY3</accession>
<accession>F4K666</accession>
<accession>Q9ZTC6</accession>
<dbReference type="EMBL" id="AY519635">
    <property type="protein sequence ID" value="AAS10105.1"/>
    <property type="molecule type" value="mRNA"/>
</dbReference>
<dbReference type="EMBL" id="AB023033">
    <property type="protein sequence ID" value="BAB10776.1"/>
    <property type="molecule type" value="Genomic_DNA"/>
</dbReference>
<dbReference type="EMBL" id="CP002688">
    <property type="protein sequence ID" value="AED95836.1"/>
    <property type="molecule type" value="Genomic_DNA"/>
</dbReference>
<dbReference type="EMBL" id="CP002688">
    <property type="protein sequence ID" value="AED95837.1"/>
    <property type="molecule type" value="Genomic_DNA"/>
</dbReference>
<dbReference type="EMBL" id="BT026076">
    <property type="protein sequence ID" value="ABG48432.1"/>
    <property type="molecule type" value="mRNA"/>
</dbReference>
<dbReference type="EMBL" id="AF062909">
    <property type="protein sequence ID" value="AAC83631.1"/>
    <property type="molecule type" value="mRNA"/>
</dbReference>
<dbReference type="PIR" id="T51681">
    <property type="entry name" value="T51681"/>
</dbReference>
<dbReference type="RefSeq" id="NP_001190502.1">
    <molecule id="Q9FGY3-2"/>
    <property type="nucleotide sequence ID" value="NM_001203573.1"/>
</dbReference>
<dbReference type="RefSeq" id="NP_199773.1">
    <molecule id="Q9FGY3-1"/>
    <property type="nucleotide sequence ID" value="NM_124340.3"/>
</dbReference>
<dbReference type="SMR" id="Q9FGY3"/>
<dbReference type="FunCoup" id="Q9FGY3">
    <property type="interactions" value="1"/>
</dbReference>
<dbReference type="IntAct" id="Q9FGY3">
    <property type="interactions" value="1"/>
</dbReference>
<dbReference type="STRING" id="3702.Q9FGY3"/>
<dbReference type="PaxDb" id="3702-AT5G49620.2"/>
<dbReference type="ProteomicsDB" id="251370">
    <molecule id="Q9FGY3-1"/>
</dbReference>
<dbReference type="EnsemblPlants" id="AT5G49620.1">
    <molecule id="Q9FGY3-1"/>
    <property type="protein sequence ID" value="AT5G49620.1"/>
    <property type="gene ID" value="AT5G49620"/>
</dbReference>
<dbReference type="EnsemblPlants" id="AT5G49620.2">
    <molecule id="Q9FGY3-2"/>
    <property type="protein sequence ID" value="AT5G49620.2"/>
    <property type="gene ID" value="AT5G49620"/>
</dbReference>
<dbReference type="GeneID" id="835024"/>
<dbReference type="Gramene" id="AT5G49620.1">
    <molecule id="Q9FGY3-1"/>
    <property type="protein sequence ID" value="AT5G49620.1"/>
    <property type="gene ID" value="AT5G49620"/>
</dbReference>
<dbReference type="Gramene" id="AT5G49620.2">
    <molecule id="Q9FGY3-2"/>
    <property type="protein sequence ID" value="AT5G49620.2"/>
    <property type="gene ID" value="AT5G49620"/>
</dbReference>
<dbReference type="KEGG" id="ath:AT5G49620"/>
<dbReference type="Araport" id="AT5G49620"/>
<dbReference type="TAIR" id="AT5G49620">
    <property type="gene designation" value="MYB78"/>
</dbReference>
<dbReference type="eggNOG" id="KOG0048">
    <property type="taxonomic scope" value="Eukaryota"/>
</dbReference>
<dbReference type="InParanoid" id="Q9FGY3"/>
<dbReference type="OMA" id="WFENISG"/>
<dbReference type="OrthoDB" id="2143914at2759"/>
<dbReference type="PhylomeDB" id="Q9FGY3"/>
<dbReference type="PRO" id="PR:Q9FGY3"/>
<dbReference type="Proteomes" id="UP000006548">
    <property type="component" value="Chromosome 5"/>
</dbReference>
<dbReference type="ExpressionAtlas" id="Q9FGY3">
    <property type="expression patterns" value="baseline and differential"/>
</dbReference>
<dbReference type="GO" id="GO:0005634">
    <property type="term" value="C:nucleus"/>
    <property type="evidence" value="ECO:0007669"/>
    <property type="project" value="UniProtKB-SubCell"/>
</dbReference>
<dbReference type="GO" id="GO:0003700">
    <property type="term" value="F:DNA-binding transcription factor activity"/>
    <property type="evidence" value="ECO:0000250"/>
    <property type="project" value="TAIR"/>
</dbReference>
<dbReference type="GO" id="GO:0000976">
    <property type="term" value="F:transcription cis-regulatory region binding"/>
    <property type="evidence" value="ECO:0000353"/>
    <property type="project" value="TAIR"/>
</dbReference>
<dbReference type="GO" id="GO:0009737">
    <property type="term" value="P:response to abscisic acid"/>
    <property type="evidence" value="ECO:0000270"/>
    <property type="project" value="TAIR"/>
</dbReference>
<dbReference type="GO" id="GO:1902074">
    <property type="term" value="P:response to salt"/>
    <property type="evidence" value="ECO:0000270"/>
    <property type="project" value="UniProtKB"/>
</dbReference>
<dbReference type="CDD" id="cd00167">
    <property type="entry name" value="SANT"/>
    <property type="match status" value="1"/>
</dbReference>
<dbReference type="FunFam" id="1.10.10.60:FF:000107">
    <property type="entry name" value="MYB transcription factor"/>
    <property type="match status" value="1"/>
</dbReference>
<dbReference type="FunFam" id="1.10.10.60:FF:000011">
    <property type="entry name" value="Myb transcription factor"/>
    <property type="match status" value="1"/>
</dbReference>
<dbReference type="Gene3D" id="1.10.10.60">
    <property type="entry name" value="Homeodomain-like"/>
    <property type="match status" value="2"/>
</dbReference>
<dbReference type="InterPro" id="IPR044676">
    <property type="entry name" value="EOBI/EOBII-like_plant"/>
</dbReference>
<dbReference type="InterPro" id="IPR009057">
    <property type="entry name" value="Homeodomain-like_sf"/>
</dbReference>
<dbReference type="InterPro" id="IPR017930">
    <property type="entry name" value="Myb_dom"/>
</dbReference>
<dbReference type="InterPro" id="IPR001005">
    <property type="entry name" value="SANT/Myb"/>
</dbReference>
<dbReference type="PANTHER" id="PTHR45675:SF1">
    <property type="entry name" value="MYB TRANSCRIPTION FACTOR-RELATED"/>
    <property type="match status" value="1"/>
</dbReference>
<dbReference type="PANTHER" id="PTHR45675">
    <property type="entry name" value="MYB TRANSCRIPTION FACTOR-RELATED-RELATED"/>
    <property type="match status" value="1"/>
</dbReference>
<dbReference type="Pfam" id="PF00249">
    <property type="entry name" value="Myb_DNA-binding"/>
    <property type="match status" value="2"/>
</dbReference>
<dbReference type="SMART" id="SM00717">
    <property type="entry name" value="SANT"/>
    <property type="match status" value="2"/>
</dbReference>
<dbReference type="SUPFAM" id="SSF46689">
    <property type="entry name" value="Homeodomain-like"/>
    <property type="match status" value="1"/>
</dbReference>
<dbReference type="PROSITE" id="PS51294">
    <property type="entry name" value="HTH_MYB"/>
    <property type="match status" value="2"/>
</dbReference>
<protein>
    <recommendedName>
        <fullName evidence="3">Transcription factor MYB78</fullName>
    </recommendedName>
    <alternativeName>
        <fullName evidence="3">Myb-related protein 78</fullName>
        <shortName evidence="3">AtMYB78</shortName>
    </alternativeName>
</protein>
<keyword id="KW-0025">Alternative splicing</keyword>
<keyword id="KW-0238">DNA-binding</keyword>
<keyword id="KW-0539">Nucleus</keyword>
<keyword id="KW-1185">Reference proteome</keyword>
<keyword id="KW-0677">Repeat</keyword>
<keyword id="KW-0804">Transcription</keyword>
<keyword id="KW-0805">Transcription regulation</keyword>
<organism>
    <name type="scientific">Arabidopsis thaliana</name>
    <name type="common">Mouse-ear cress</name>
    <dbReference type="NCBI Taxonomy" id="3702"/>
    <lineage>
        <taxon>Eukaryota</taxon>
        <taxon>Viridiplantae</taxon>
        <taxon>Streptophyta</taxon>
        <taxon>Embryophyta</taxon>
        <taxon>Tracheophyta</taxon>
        <taxon>Spermatophyta</taxon>
        <taxon>Magnoliopsida</taxon>
        <taxon>eudicotyledons</taxon>
        <taxon>Gunneridae</taxon>
        <taxon>Pentapetalae</taxon>
        <taxon>rosids</taxon>
        <taxon>malvids</taxon>
        <taxon>Brassicales</taxon>
        <taxon>Brassicaceae</taxon>
        <taxon>Camelineae</taxon>
        <taxon>Arabidopsis</taxon>
    </lineage>
</organism>
<reference key="1">
    <citation type="submission" date="2004-01" db="EMBL/GenBank/DDBJ databases">
        <title>The MYB transcription factor family in Arabidopsis: A genome-wide cloning and expression pattern analysis.</title>
        <authorList>
            <person name="Qu L."/>
            <person name="Gu H."/>
        </authorList>
    </citation>
    <scope>NUCLEOTIDE SEQUENCE [MRNA] (ISOFORM 1)</scope>
</reference>
<reference key="2">
    <citation type="journal article" date="2000" name="DNA Res.">
        <title>Structural analysis of Arabidopsis thaliana chromosome 5. X. Sequence features of the regions of 3,076,755 bp covered by sixty P1 and TAC clones.</title>
        <authorList>
            <person name="Sato S."/>
            <person name="Nakamura Y."/>
            <person name="Kaneko T."/>
            <person name="Katoh T."/>
            <person name="Asamizu E."/>
            <person name="Kotani H."/>
            <person name="Tabata S."/>
        </authorList>
    </citation>
    <scope>NUCLEOTIDE SEQUENCE [LARGE SCALE GENOMIC DNA]</scope>
    <source>
        <strain>cv. Columbia</strain>
    </source>
</reference>
<reference key="3">
    <citation type="journal article" date="2017" name="Plant J.">
        <title>Araport11: a complete reannotation of the Arabidopsis thaliana reference genome.</title>
        <authorList>
            <person name="Cheng C.Y."/>
            <person name="Krishnakumar V."/>
            <person name="Chan A.P."/>
            <person name="Thibaud-Nissen F."/>
            <person name="Schobel S."/>
            <person name="Town C.D."/>
        </authorList>
    </citation>
    <scope>GENOME REANNOTATION</scope>
    <source>
        <strain>cv. Columbia</strain>
    </source>
</reference>
<reference key="4">
    <citation type="submission" date="2006-07" db="EMBL/GenBank/DDBJ databases">
        <title>Arabidopsis ORF clones.</title>
        <authorList>
            <person name="Quinitio C."/>
            <person name="Chen H."/>
            <person name="Kim C.J."/>
            <person name="Shinn P."/>
            <person name="Ecker J.R."/>
        </authorList>
    </citation>
    <scope>NUCLEOTIDE SEQUENCE [LARGE SCALE MRNA] (ISOFORM 1)</scope>
    <source>
        <strain>cv. Columbia</strain>
    </source>
</reference>
<reference key="5">
    <citation type="journal article" date="1998" name="Plant J.">
        <title>Towards functional characterisation of the members of the R2R3-MYB gene family from Arabidopsis thaliana.</title>
        <authorList>
            <person name="Kranz H.D."/>
            <person name="Denekamp M."/>
            <person name="Greco R."/>
            <person name="Jin H.-L."/>
            <person name="Leyva A."/>
            <person name="Meissner R.C."/>
            <person name="Petroni K."/>
            <person name="Urzainqui A."/>
            <person name="Bevan M."/>
            <person name="Martin C."/>
            <person name="Smeekens S."/>
            <person name="Tonelli C."/>
            <person name="Paz-Ares J."/>
            <person name="Weisshaar B."/>
        </authorList>
    </citation>
    <scope>NUCLEOTIDE SEQUENCE [MRNA] OF 90-307 (ISOFORM 1)</scope>
    <scope>GENE FAMILY</scope>
    <scope>NOMENCLATURE</scope>
    <source>
        <strain>cv. Columbia</strain>
    </source>
</reference>
<reference key="6">
    <citation type="journal article" date="2001" name="Curr. Opin. Plant Biol.">
        <title>The R2R3-MYB gene family in Arabidopsis thaliana.</title>
        <authorList>
            <person name="Stracke R."/>
            <person name="Werber M."/>
            <person name="Weisshaar B."/>
        </authorList>
    </citation>
    <scope>GENE FAMILY</scope>
    <scope>NOMENCLATURE</scope>
</reference>
<reference key="7">
    <citation type="journal article" date="2006" name="Plant Mol. Biol.">
        <title>The MYB transcription factor superfamily of Arabidopsis: expression analysis and phylogenetic comparison with the rice MYB family.</title>
        <authorList>
            <person name="Chen Y."/>
            <person name="Yang X."/>
            <person name="He K."/>
            <person name="Liu M."/>
            <person name="Li J."/>
            <person name="Gao Z."/>
            <person name="Lin Z."/>
            <person name="Zhang Y."/>
            <person name="Wang X."/>
            <person name="Qiu X."/>
            <person name="Shen Y."/>
            <person name="Zhang L."/>
            <person name="Deng X."/>
            <person name="Luo J."/>
            <person name="Deng X.-W."/>
            <person name="Chen Z."/>
            <person name="Gu H."/>
            <person name="Qu L.-J."/>
        </authorList>
    </citation>
    <scope>INDUCTION BY SALT</scope>
    <scope>GENE FAMILY</scope>
</reference>
<feature type="chain" id="PRO_0000438967" description="Transcription factor MYB78">
    <location>
        <begin position="1"/>
        <end position="307"/>
    </location>
</feature>
<feature type="domain" description="HTH myb-type 1" evidence="1">
    <location>
        <begin position="23"/>
        <end position="79"/>
    </location>
</feature>
<feature type="domain" description="HTH myb-type 2" evidence="1">
    <location>
        <begin position="80"/>
        <end position="130"/>
    </location>
</feature>
<feature type="DNA-binding region" description="H-T-H motif" evidence="1">
    <location>
        <begin position="51"/>
        <end position="75"/>
    </location>
</feature>
<feature type="DNA-binding region" description="H-T-H motif" evidence="1">
    <location>
        <begin position="103"/>
        <end position="126"/>
    </location>
</feature>
<feature type="splice variant" id="VSP_058768" description="In isoform 2.">
    <original>N</original>
    <variation>NSNEFDHKFSSSCED</variation>
    <location>
        <position position="101"/>
    </location>
</feature>
<sequence length="307" mass="35501">MGDKGRSLKINKNMEEFTKVEEEMDVRRGPWTVEEDLELINYIASHGEGRWNSLARCAELKRTGKSCRLRWLNYLRPDVRRGNITLEEQLLILELHTRWGNRWSKIAQYLPGRTDNEIKNYWRTRVQKHAKQLKCDVNSQQFKDTMKYLWMPRLVERIQAASIGSVSMSSCVTTSSDQFVINNNNTNNVDNLALMSNPNGYITPDNSSVAVSPVSDLTECQVSSEVWKIGQDENLVDPKMTSPNYMDNSSGLLNGDFTKMQDQSDLNWFENINGMVPNYSDSFWNIGNDEDFWLLQQHQQVHDNGSF</sequence>
<gene>
    <name evidence="3" type="primary">MYB78</name>
    <name evidence="4" type="ordered locus">At5g49620</name>
    <name evidence="5" type="ORF">K6M13.18</name>
</gene>
<name>MYB78_ARATH</name>
<comment type="interaction">
    <interactant intactId="EBI-25518013">
        <id>Q9FGY3</id>
    </interactant>
    <interactant intactId="EBI-25517998">
        <id>Q8LFK2</id>
        <label>HRU1</label>
    </interactant>
    <organismsDiffer>false</organismsDiffer>
    <experiments>3</experiments>
</comment>
<comment type="subcellular location">
    <subcellularLocation>
        <location evidence="1">Nucleus</location>
    </subcellularLocation>
</comment>
<comment type="alternative products">
    <event type="alternative splicing"/>
    <isoform>
        <id>Q9FGY3-1</id>
        <name>1</name>
        <sequence type="displayed"/>
    </isoform>
    <isoform>
        <id>Q9FGY3-2</id>
        <name>2</name>
        <sequence type="described" ref="VSP_058768"/>
    </isoform>
</comment>
<comment type="induction">
    <text evidence="2">By salt (NaCl).</text>
</comment>
<proteinExistence type="evidence at protein level"/>
<evidence type="ECO:0000255" key="1">
    <source>
        <dbReference type="PROSITE-ProRule" id="PRU00625"/>
    </source>
</evidence>
<evidence type="ECO:0000269" key="2">
    <source>
    </source>
</evidence>
<evidence type="ECO:0000303" key="3">
    <source>
    </source>
</evidence>
<evidence type="ECO:0000312" key="4">
    <source>
        <dbReference type="Araport" id="AT5G49620"/>
    </source>
</evidence>
<evidence type="ECO:0000312" key="5">
    <source>
        <dbReference type="EMBL" id="BAB10776.1"/>
    </source>
</evidence>